<keyword id="KW-0186">Copper</keyword>
<keyword id="KW-1015">Disulfide bond</keyword>
<keyword id="KW-0325">Glycoprotein</keyword>
<keyword id="KW-0439">Lignin degradation</keyword>
<keyword id="KW-0479">Metal-binding</keyword>
<keyword id="KW-0560">Oxidoreductase</keyword>
<keyword id="KW-0677">Repeat</keyword>
<keyword id="KW-0964">Secreted</keyword>
<keyword id="KW-0732">Signal</keyword>
<reference key="1">
    <citation type="journal article" date="1996" name="Curr. Genet.">
        <title>The identification and characterization of four laccases from the plant pathogenic fungus Rhizoctonia solani.</title>
        <authorList>
            <person name="Wahleithner J.A."/>
            <person name="Xu F."/>
            <person name="Brown K.M."/>
            <person name="Brown S.H."/>
            <person name="Golightly E.J."/>
            <person name="Halkier T."/>
            <person name="Kauppinen S."/>
            <person name="Pederson A."/>
            <person name="Schneider P."/>
        </authorList>
    </citation>
    <scope>NUCLEOTIDE SEQUENCE [GENOMIC DNA]</scope>
    <scope>TISSUE SPECIFICITY</scope>
    <source>
        <strain>R22 / IMI 358730 / AG-6</strain>
    </source>
</reference>
<proteinExistence type="evidence at transcript level"/>
<organism>
    <name type="scientific">Thanatephorus cucumeris</name>
    <name type="common">Black scurf of potato</name>
    <name type="synonym">Rhizoctonia solani</name>
    <dbReference type="NCBI Taxonomy" id="107832"/>
    <lineage>
        <taxon>Eukaryota</taxon>
        <taxon>Fungi</taxon>
        <taxon>Dikarya</taxon>
        <taxon>Basidiomycota</taxon>
        <taxon>Agaricomycotina</taxon>
        <taxon>Agaricomycetes</taxon>
        <taxon>Cantharellales</taxon>
        <taxon>Ceratobasidiaceae</taxon>
        <taxon>Thanatephorus</taxon>
    </lineage>
</organism>
<protein>
    <recommendedName>
        <fullName>Laccase-3</fullName>
        <ecNumber evidence="2">1.10.3.2</ecNumber>
    </recommendedName>
    <alternativeName>
        <fullName>Benzenediol:oxygen oxidoreductase 3</fullName>
    </alternativeName>
    <alternativeName>
        <fullName>Diphenol oxidase 3</fullName>
    </alternativeName>
    <alternativeName>
        <fullName>Urishiol oxidase 3</fullName>
    </alternativeName>
</protein>
<gene>
    <name type="primary">LCC3</name>
</gene>
<name>LAC3_THACU</name>
<accession>Q02079</accession>
<evidence type="ECO:0000250" key="1">
    <source>
        <dbReference type="UniProtKB" id="D0VWU3"/>
    </source>
</evidence>
<evidence type="ECO:0000250" key="2">
    <source>
        <dbReference type="UniProtKB" id="Q70KY3"/>
    </source>
</evidence>
<evidence type="ECO:0000250" key="3">
    <source>
        <dbReference type="UniProtKB" id="Q99046"/>
    </source>
</evidence>
<evidence type="ECO:0000255" key="4"/>
<evidence type="ECO:0000269" key="5">
    <source>
    </source>
</evidence>
<evidence type="ECO:0000305" key="6"/>
<sequence length="572" mass="63747">MARTTFLVSVSLFVSAVLARTVEYNLKISNGKIAPDGVERDATLVNGGYPGPLIFANKGDTLKVKVQNKLTNPDMYRTTSIHWHGLLQHRNADDDGPAFVTQCPIVPQASYTYTMPLGDQTGTYWYHSHLSSQYVDGLRGPLVIYDPKDPHRRLYDIDDEKTVLIIGDWYHTSSKAILATGNITLQQPDSATINGKGRFDPDNTPANPNTLYTLKVKRGKRYRLRVINSSAIASFRMSIQGHKMTVIAADGVSTKPYQVDSFDILAGQRIDAVVEANQEPDTYWINAPLTNVANKTAQALLIYEDDRRPYHPPKGPYRKWSVSEAIIKYWKHKHGRGLLSGHGGLKARMMEGSLHLHGRRDIVKRQNETTTVVMDETKLVPLEHPGAACGSKPADLVIDLTFGVNFTTGHWMINGIPHKSPDMPTLLKILTDTDGVTESDFTQPEHTIILPKNKCVEFNIKGNSGLGIVHPIHLHGHTFDVVQFGNNPPNYVNPPRRDVVGATDEGVRFQFKTDNPGPWFLHCHIDWHLEEGFAMVFAEAPEAIKGGPKSVPVDRQWKDLCRKYGSLPAGFL</sequence>
<comment type="function">
    <text evidence="2">Lignin degradation and detoxification of lignin-derived products.</text>
</comment>
<comment type="catalytic activity">
    <reaction evidence="2">
        <text>4 hydroquinone + O2 = 4 benzosemiquinone + 2 H2O</text>
        <dbReference type="Rhea" id="RHEA:11276"/>
        <dbReference type="ChEBI" id="CHEBI:15377"/>
        <dbReference type="ChEBI" id="CHEBI:15379"/>
        <dbReference type="ChEBI" id="CHEBI:17594"/>
        <dbReference type="ChEBI" id="CHEBI:17977"/>
        <dbReference type="EC" id="1.10.3.2"/>
    </reaction>
</comment>
<comment type="cofactor">
    <cofactor evidence="2">
        <name>Cu cation</name>
        <dbReference type="ChEBI" id="CHEBI:23378"/>
    </cofactor>
    <text evidence="2">Binds 4 Cu cations per monomer.</text>
</comment>
<comment type="subunit">
    <text evidence="3">Homodimer.</text>
</comment>
<comment type="subcellular location">
    <subcellularLocation>
        <location evidence="2">Secreted</location>
    </subcellularLocation>
</comment>
<comment type="tissue specificity">
    <text evidence="5">In mycelia, at a lower level than LCC4.</text>
</comment>
<comment type="similarity">
    <text evidence="6">Belongs to the multicopper oxidase family.</text>
</comment>
<feature type="signal peptide" evidence="4">
    <location>
        <begin position="1"/>
        <end position="18"/>
    </location>
</feature>
<feature type="chain" id="PRO_0000002937" description="Laccase-3">
    <location>
        <begin position="19"/>
        <end position="572"/>
    </location>
</feature>
<feature type="domain" description="Plastocyanin-like 1">
    <location>
        <begin position="21"/>
        <end position="145"/>
    </location>
</feature>
<feature type="domain" description="Plastocyanin-like 2">
    <location>
        <begin position="157"/>
        <end position="304"/>
    </location>
</feature>
<feature type="domain" description="Plastocyanin-like 3">
    <location>
        <begin position="422"/>
        <end position="540"/>
    </location>
</feature>
<feature type="binding site" description="type 2 copper site" evidence="1">
    <location>
        <position position="82"/>
    </location>
    <ligand>
        <name>Cu cation</name>
        <dbReference type="ChEBI" id="CHEBI:23378"/>
        <label>1</label>
    </ligand>
</feature>
<feature type="binding site" description="type 3 copper site" evidence="1">
    <location>
        <position position="84"/>
    </location>
    <ligand>
        <name>Cu cation</name>
        <dbReference type="ChEBI" id="CHEBI:23378"/>
        <label>2</label>
    </ligand>
</feature>
<feature type="binding site" description="type 3 copper site" evidence="1">
    <location>
        <position position="127"/>
    </location>
    <ligand>
        <name>Cu cation</name>
        <dbReference type="ChEBI" id="CHEBI:23378"/>
        <label>2</label>
    </ligand>
</feature>
<feature type="binding site" description="type 3 copper site" evidence="1">
    <location>
        <position position="129"/>
    </location>
    <ligand>
        <name>Cu cation</name>
        <dbReference type="ChEBI" id="CHEBI:23378"/>
        <label>3</label>
    </ligand>
</feature>
<feature type="binding site" description="type 1 copper site" evidence="1">
    <location>
        <position position="470"/>
    </location>
    <ligand>
        <name>Cu cation</name>
        <dbReference type="ChEBI" id="CHEBI:23378"/>
        <label>4</label>
    </ligand>
</feature>
<feature type="binding site" description="type 2 copper site" evidence="1">
    <location>
        <position position="473"/>
    </location>
    <ligand>
        <name>Cu cation</name>
        <dbReference type="ChEBI" id="CHEBI:23378"/>
        <label>1</label>
    </ligand>
</feature>
<feature type="binding site" description="type 3 copper site" evidence="1">
    <location>
        <position position="475"/>
    </location>
    <ligand>
        <name>Cu cation</name>
        <dbReference type="ChEBI" id="CHEBI:23378"/>
        <label>3</label>
    </ligand>
</feature>
<feature type="binding site" description="type 3 copper site" evidence="1">
    <location>
        <position position="522"/>
    </location>
    <ligand>
        <name>Cu cation</name>
        <dbReference type="ChEBI" id="CHEBI:23378"/>
        <label>3</label>
    </ligand>
</feature>
<feature type="binding site" description="type 1 copper site" evidence="1">
    <location>
        <position position="523"/>
    </location>
    <ligand>
        <name>Cu cation</name>
        <dbReference type="ChEBI" id="CHEBI:23378"/>
        <label>4</label>
    </ligand>
</feature>
<feature type="binding site" description="type 3 copper site" evidence="1">
    <location>
        <position position="524"/>
    </location>
    <ligand>
        <name>Cu cation</name>
        <dbReference type="ChEBI" id="CHEBI:23378"/>
        <label>2</label>
    </ligand>
</feature>
<feature type="binding site" description="type 1 copper site" evidence="1">
    <location>
        <position position="528"/>
    </location>
    <ligand>
        <name>Cu cation</name>
        <dbReference type="ChEBI" id="CHEBI:23378"/>
        <label>4</label>
    </ligand>
</feature>
<feature type="glycosylation site" description="N-linked (GlcNAc...) asparagine" evidence="4">
    <location>
        <position position="182"/>
    </location>
</feature>
<feature type="glycosylation site" description="N-linked (GlcNAc...) asparagine" evidence="4">
    <location>
        <position position="228"/>
    </location>
</feature>
<feature type="glycosylation site" description="N-linked (GlcNAc...) asparagine" evidence="4">
    <location>
        <position position="294"/>
    </location>
</feature>
<feature type="glycosylation site" description="N-linked (GlcNAc...) asparagine" evidence="4">
    <location>
        <position position="367"/>
    </location>
</feature>
<feature type="glycosylation site" description="N-linked (GlcNAc...) asparagine" evidence="4">
    <location>
        <position position="405"/>
    </location>
</feature>
<feature type="disulfide bond" evidence="2">
    <location>
        <begin position="103"/>
        <end position="561"/>
    </location>
</feature>
<feature type="sequence variant">
    <original>D</original>
    <variation>N</variation>
    <location>
        <position position="159"/>
    </location>
</feature>
<feature type="sequence variant">
    <original>R</original>
    <variation>H</variation>
    <location>
        <position position="359"/>
    </location>
</feature>
<feature type="sequence variant">
    <original>H</original>
    <variation>Y</variation>
    <location>
        <position position="418"/>
    </location>
</feature>
<feature type="sequence variant">
    <original>I</original>
    <variation>V</variation>
    <location>
        <position position="448"/>
    </location>
</feature>
<dbReference type="EC" id="1.10.3.2" evidence="2"/>
<dbReference type="EMBL" id="Z54215">
    <property type="protein sequence ID" value="CAA90942.1"/>
    <property type="molecule type" value="Genomic_DNA"/>
</dbReference>
<dbReference type="PIR" id="S68119">
    <property type="entry name" value="S68119"/>
</dbReference>
<dbReference type="SMR" id="Q02079"/>
<dbReference type="CAZy" id="AA1">
    <property type="family name" value="Auxiliary Activities 1"/>
</dbReference>
<dbReference type="GlyCosmos" id="Q02079">
    <property type="glycosylation" value="5 sites, No reported glycans"/>
</dbReference>
<dbReference type="GO" id="GO:0005576">
    <property type="term" value="C:extracellular region"/>
    <property type="evidence" value="ECO:0007669"/>
    <property type="project" value="UniProtKB-SubCell"/>
</dbReference>
<dbReference type="GO" id="GO:0005507">
    <property type="term" value="F:copper ion binding"/>
    <property type="evidence" value="ECO:0007669"/>
    <property type="project" value="InterPro"/>
</dbReference>
<dbReference type="GO" id="GO:0052716">
    <property type="term" value="F:hydroquinone:oxygen oxidoreductase activity"/>
    <property type="evidence" value="ECO:0007669"/>
    <property type="project" value="UniProtKB-EC"/>
</dbReference>
<dbReference type="GO" id="GO:0046274">
    <property type="term" value="P:lignin catabolic process"/>
    <property type="evidence" value="ECO:0007669"/>
    <property type="project" value="UniProtKB-KW"/>
</dbReference>
<dbReference type="CDD" id="cd13856">
    <property type="entry name" value="CuRO_1_Tv-LCC_like"/>
    <property type="match status" value="1"/>
</dbReference>
<dbReference type="CDD" id="cd13882">
    <property type="entry name" value="CuRO_2_Tv-LCC_like"/>
    <property type="match status" value="1"/>
</dbReference>
<dbReference type="CDD" id="cd13903">
    <property type="entry name" value="CuRO_3_Tv-LCC_like"/>
    <property type="match status" value="1"/>
</dbReference>
<dbReference type="FunFam" id="2.60.40.420:FF:000045">
    <property type="entry name" value="Laccase 2"/>
    <property type="match status" value="1"/>
</dbReference>
<dbReference type="Gene3D" id="2.60.40.420">
    <property type="entry name" value="Cupredoxins - blue copper proteins"/>
    <property type="match status" value="3"/>
</dbReference>
<dbReference type="InterPro" id="IPR011707">
    <property type="entry name" value="Cu-oxidase-like_N"/>
</dbReference>
<dbReference type="InterPro" id="IPR001117">
    <property type="entry name" value="Cu-oxidase_2nd"/>
</dbReference>
<dbReference type="InterPro" id="IPR011706">
    <property type="entry name" value="Cu-oxidase_C"/>
</dbReference>
<dbReference type="InterPro" id="IPR045087">
    <property type="entry name" value="Cu-oxidase_fam"/>
</dbReference>
<dbReference type="InterPro" id="IPR033138">
    <property type="entry name" value="Cu_oxidase_CS"/>
</dbReference>
<dbReference type="InterPro" id="IPR008972">
    <property type="entry name" value="Cupredoxin"/>
</dbReference>
<dbReference type="PANTHER" id="PTHR11709:SF511">
    <property type="entry name" value="LACCASE"/>
    <property type="match status" value="1"/>
</dbReference>
<dbReference type="PANTHER" id="PTHR11709">
    <property type="entry name" value="MULTI-COPPER OXIDASE"/>
    <property type="match status" value="1"/>
</dbReference>
<dbReference type="Pfam" id="PF00394">
    <property type="entry name" value="Cu-oxidase"/>
    <property type="match status" value="1"/>
</dbReference>
<dbReference type="Pfam" id="PF07731">
    <property type="entry name" value="Cu-oxidase_2"/>
    <property type="match status" value="1"/>
</dbReference>
<dbReference type="Pfam" id="PF07732">
    <property type="entry name" value="Cu-oxidase_3"/>
    <property type="match status" value="1"/>
</dbReference>
<dbReference type="SUPFAM" id="SSF49503">
    <property type="entry name" value="Cupredoxins"/>
    <property type="match status" value="3"/>
</dbReference>
<dbReference type="PROSITE" id="PS00079">
    <property type="entry name" value="MULTICOPPER_OXIDASE1"/>
    <property type="match status" value="1"/>
</dbReference>